<reference key="1">
    <citation type="submission" date="2007-10" db="EMBL/GenBank/DDBJ databases">
        <title>Complete sequence of Salinispora arenicola CNS-205.</title>
        <authorList>
            <consortium name="US DOE Joint Genome Institute"/>
            <person name="Copeland A."/>
            <person name="Lucas S."/>
            <person name="Lapidus A."/>
            <person name="Barry K."/>
            <person name="Glavina del Rio T."/>
            <person name="Dalin E."/>
            <person name="Tice H."/>
            <person name="Pitluck S."/>
            <person name="Foster B."/>
            <person name="Schmutz J."/>
            <person name="Larimer F."/>
            <person name="Land M."/>
            <person name="Hauser L."/>
            <person name="Kyrpides N."/>
            <person name="Ivanova N."/>
            <person name="Jensen P.R."/>
            <person name="Moore B.S."/>
            <person name="Penn K."/>
            <person name="Jenkins C."/>
            <person name="Udwary D."/>
            <person name="Xiang L."/>
            <person name="Gontang E."/>
            <person name="Richardson P."/>
        </authorList>
    </citation>
    <scope>NUCLEOTIDE SEQUENCE [LARGE SCALE GENOMIC DNA]</scope>
    <source>
        <strain>CNS-205</strain>
    </source>
</reference>
<dbReference type="EC" id="2.7.7.56" evidence="1"/>
<dbReference type="EMBL" id="CP000850">
    <property type="protein sequence ID" value="ABV96905.1"/>
    <property type="molecule type" value="Genomic_DNA"/>
</dbReference>
<dbReference type="SMR" id="A8M4I1"/>
<dbReference type="STRING" id="391037.Sare_0994"/>
<dbReference type="KEGG" id="saq:Sare_0994"/>
<dbReference type="PATRIC" id="fig|391037.6.peg.1010"/>
<dbReference type="eggNOG" id="COG0689">
    <property type="taxonomic scope" value="Bacteria"/>
</dbReference>
<dbReference type="HOGENOM" id="CLU_050858_0_0_11"/>
<dbReference type="OrthoDB" id="9802265at2"/>
<dbReference type="GO" id="GO:0000175">
    <property type="term" value="F:3'-5'-RNA exonuclease activity"/>
    <property type="evidence" value="ECO:0007669"/>
    <property type="project" value="UniProtKB-UniRule"/>
</dbReference>
<dbReference type="GO" id="GO:0000049">
    <property type="term" value="F:tRNA binding"/>
    <property type="evidence" value="ECO:0007669"/>
    <property type="project" value="UniProtKB-UniRule"/>
</dbReference>
<dbReference type="GO" id="GO:0009022">
    <property type="term" value="F:tRNA nucleotidyltransferase activity"/>
    <property type="evidence" value="ECO:0007669"/>
    <property type="project" value="UniProtKB-UniRule"/>
</dbReference>
<dbReference type="GO" id="GO:0016075">
    <property type="term" value="P:rRNA catabolic process"/>
    <property type="evidence" value="ECO:0007669"/>
    <property type="project" value="UniProtKB-UniRule"/>
</dbReference>
<dbReference type="GO" id="GO:0006364">
    <property type="term" value="P:rRNA processing"/>
    <property type="evidence" value="ECO:0007669"/>
    <property type="project" value="UniProtKB-KW"/>
</dbReference>
<dbReference type="GO" id="GO:0008033">
    <property type="term" value="P:tRNA processing"/>
    <property type="evidence" value="ECO:0007669"/>
    <property type="project" value="UniProtKB-UniRule"/>
</dbReference>
<dbReference type="FunFam" id="3.30.230.70:FF:000003">
    <property type="entry name" value="Ribonuclease PH"/>
    <property type="match status" value="1"/>
</dbReference>
<dbReference type="Gene3D" id="3.30.230.70">
    <property type="entry name" value="GHMP Kinase, N-terminal domain"/>
    <property type="match status" value="1"/>
</dbReference>
<dbReference type="HAMAP" id="MF_00564">
    <property type="entry name" value="RNase_PH"/>
    <property type="match status" value="1"/>
</dbReference>
<dbReference type="InterPro" id="IPR001247">
    <property type="entry name" value="ExoRNase_PH_dom1"/>
</dbReference>
<dbReference type="InterPro" id="IPR015847">
    <property type="entry name" value="ExoRNase_PH_dom2"/>
</dbReference>
<dbReference type="InterPro" id="IPR036345">
    <property type="entry name" value="ExoRNase_PH_dom2_sf"/>
</dbReference>
<dbReference type="InterPro" id="IPR027408">
    <property type="entry name" value="PNPase/RNase_PH_dom_sf"/>
</dbReference>
<dbReference type="InterPro" id="IPR020568">
    <property type="entry name" value="Ribosomal_Su5_D2-typ_SF"/>
</dbReference>
<dbReference type="InterPro" id="IPR050080">
    <property type="entry name" value="RNase_PH"/>
</dbReference>
<dbReference type="InterPro" id="IPR002381">
    <property type="entry name" value="RNase_PH_bac-type"/>
</dbReference>
<dbReference type="InterPro" id="IPR018336">
    <property type="entry name" value="RNase_PH_CS"/>
</dbReference>
<dbReference type="NCBIfam" id="TIGR01966">
    <property type="entry name" value="RNasePH"/>
    <property type="match status" value="1"/>
</dbReference>
<dbReference type="PANTHER" id="PTHR11953">
    <property type="entry name" value="EXOSOME COMPLEX COMPONENT"/>
    <property type="match status" value="1"/>
</dbReference>
<dbReference type="PANTHER" id="PTHR11953:SF0">
    <property type="entry name" value="EXOSOME COMPLEX COMPONENT RRP41"/>
    <property type="match status" value="1"/>
</dbReference>
<dbReference type="Pfam" id="PF01138">
    <property type="entry name" value="RNase_PH"/>
    <property type="match status" value="1"/>
</dbReference>
<dbReference type="Pfam" id="PF03725">
    <property type="entry name" value="RNase_PH_C"/>
    <property type="match status" value="1"/>
</dbReference>
<dbReference type="SUPFAM" id="SSF55666">
    <property type="entry name" value="Ribonuclease PH domain 2-like"/>
    <property type="match status" value="1"/>
</dbReference>
<dbReference type="SUPFAM" id="SSF54211">
    <property type="entry name" value="Ribosomal protein S5 domain 2-like"/>
    <property type="match status" value="1"/>
</dbReference>
<dbReference type="PROSITE" id="PS01277">
    <property type="entry name" value="RIBONUCLEASE_PH"/>
    <property type="match status" value="1"/>
</dbReference>
<organism>
    <name type="scientific">Salinispora arenicola (strain CNS-205)</name>
    <dbReference type="NCBI Taxonomy" id="391037"/>
    <lineage>
        <taxon>Bacteria</taxon>
        <taxon>Bacillati</taxon>
        <taxon>Actinomycetota</taxon>
        <taxon>Actinomycetes</taxon>
        <taxon>Micromonosporales</taxon>
        <taxon>Micromonosporaceae</taxon>
        <taxon>Salinispora</taxon>
    </lineage>
</organism>
<gene>
    <name evidence="1" type="primary">rph</name>
    <name type="ordered locus">Sare_0994</name>
</gene>
<keyword id="KW-0548">Nucleotidyltransferase</keyword>
<keyword id="KW-0694">RNA-binding</keyword>
<keyword id="KW-0698">rRNA processing</keyword>
<keyword id="KW-0808">Transferase</keyword>
<keyword id="KW-0819">tRNA processing</keyword>
<keyword id="KW-0820">tRNA-binding</keyword>
<feature type="chain" id="PRO_1000082300" description="Ribonuclease PH">
    <location>
        <begin position="1"/>
        <end position="241"/>
    </location>
</feature>
<feature type="binding site" evidence="1">
    <location>
        <position position="87"/>
    </location>
    <ligand>
        <name>phosphate</name>
        <dbReference type="ChEBI" id="CHEBI:43474"/>
        <note>substrate</note>
    </ligand>
</feature>
<feature type="binding site" evidence="1">
    <location>
        <begin position="125"/>
        <end position="127"/>
    </location>
    <ligand>
        <name>phosphate</name>
        <dbReference type="ChEBI" id="CHEBI:43474"/>
        <note>substrate</note>
    </ligand>
</feature>
<proteinExistence type="inferred from homology"/>
<comment type="function">
    <text evidence="1">Phosphorolytic 3'-5' exoribonuclease that plays an important role in tRNA 3'-end maturation. Removes nucleotide residues following the 3'-CCA terminus of tRNAs; can also add nucleotides to the ends of RNA molecules by using nucleoside diphosphates as substrates, but this may not be physiologically important. Probably plays a role in initiation of 16S rRNA degradation (leading to ribosome degradation) during starvation.</text>
</comment>
<comment type="catalytic activity">
    <reaction evidence="1">
        <text>tRNA(n+1) + phosphate = tRNA(n) + a ribonucleoside 5'-diphosphate</text>
        <dbReference type="Rhea" id="RHEA:10628"/>
        <dbReference type="Rhea" id="RHEA-COMP:17343"/>
        <dbReference type="Rhea" id="RHEA-COMP:17344"/>
        <dbReference type="ChEBI" id="CHEBI:43474"/>
        <dbReference type="ChEBI" id="CHEBI:57930"/>
        <dbReference type="ChEBI" id="CHEBI:173114"/>
        <dbReference type="EC" id="2.7.7.56"/>
    </reaction>
</comment>
<comment type="subunit">
    <text evidence="1">Homohexameric ring arranged as a trimer of dimers.</text>
</comment>
<comment type="similarity">
    <text evidence="1">Belongs to the RNase PH family.</text>
</comment>
<evidence type="ECO:0000255" key="1">
    <source>
        <dbReference type="HAMAP-Rule" id="MF_00564"/>
    </source>
</evidence>
<accession>A8M4I1</accession>
<sequence>MARPDGRLPDHLRPVTLTRGWSTHPEGSVLVEFGATRVLCTASVTEGVPRWRKGSGLGWVTAEYAMLPRATNTRSDRESVKGRVGGRTHEISRLIGRSLRASIDLKALGENSVVLDCDVLQADGGTRTAAITGAYVALYDAVTWLAARRSLAGRPENVMHRSVAAVSVGVVAGEPRLDLNYDEDATAEVDLNVVCTGTGDFVEVQGTGEAGVFSRGQLDALLDLAVAGCLDLAEAQRKALS</sequence>
<name>RNPH_SALAI</name>
<protein>
    <recommendedName>
        <fullName evidence="1">Ribonuclease PH</fullName>
        <shortName evidence="1">RNase PH</shortName>
        <ecNumber evidence="1">2.7.7.56</ecNumber>
    </recommendedName>
    <alternativeName>
        <fullName evidence="1">tRNA nucleotidyltransferase</fullName>
    </alternativeName>
</protein>